<sequence>MDSSDSKAATDEEIRRALKAADLMKILDGKIALGNKSGTKNLGEHKFWKTQPVPQITGSGAPAPIEEGPIDDPKTPADVRQEPGVLPAGFEWSTIDINDEEQSKEVYVLLCENYVEDDDAMFRFNYSREFLLWALTAPGYLPDWHIGVRVQKTKKLVAFISGIKIDIRVRAKTFPAAEINFLCVHKKLRSKRLAPVLIKEVTRRVNLTNIWQAIYTAGVILPTPIGTCRYFHRNLNPPKLVDIGFSPLPRGSTIARLVQQYSVPSHPRIPGFREMKKEDVPQVGALLRRYLDRFDVAQAFRDDDEVEHWLLSGQGKEVGGRRVEQVVWAYVVEDPTTHRITDLISFYALPSTIMKHPKHNLLNAAYMFYYATDVVFPPSSSSANSDVDVDANAGESSVAAVGTGGEDAKTKKKLETRLNALTADILIIAKQAGFDVFNALTLLDNNMFLQEQKFGPGDGYLNYYLYNWNCAPIDGGHHSTTAKQGSKIGVVML</sequence>
<proteinExistence type="inferred from homology"/>
<comment type="function">
    <text evidence="1">Adds a myristoyl group to the N-terminal glycine residue of certain cellular proteins.</text>
</comment>
<comment type="catalytic activity">
    <reaction>
        <text>N-terminal glycyl-[protein] + tetradecanoyl-CoA = N-tetradecanoylglycyl-[protein] + CoA + H(+)</text>
        <dbReference type="Rhea" id="RHEA:15521"/>
        <dbReference type="Rhea" id="RHEA-COMP:12666"/>
        <dbReference type="Rhea" id="RHEA-COMP:12667"/>
        <dbReference type="ChEBI" id="CHEBI:15378"/>
        <dbReference type="ChEBI" id="CHEBI:57287"/>
        <dbReference type="ChEBI" id="CHEBI:57385"/>
        <dbReference type="ChEBI" id="CHEBI:64723"/>
        <dbReference type="ChEBI" id="CHEBI:133050"/>
        <dbReference type="EC" id="2.3.1.97"/>
    </reaction>
</comment>
<comment type="subunit">
    <text evidence="1">Monomer.</text>
</comment>
<comment type="subcellular location">
    <subcellularLocation>
        <location evidence="1">Cytoplasm</location>
    </subcellularLocation>
</comment>
<comment type="similarity">
    <text evidence="4">Belongs to the NMT family.</text>
</comment>
<comment type="sequence caution" evidence="4">
    <conflict type="erroneous gene model prediction">
        <sequence resource="EMBL-CDS" id="AAW47000"/>
    </conflict>
</comment>
<feature type="chain" id="PRO_0000064238" description="Glycylpeptide N-tetradecanoyltransferase">
    <location>
        <begin position="1"/>
        <end position="493"/>
    </location>
</feature>
<feature type="region of interest" description="Disordered" evidence="3">
    <location>
        <begin position="53"/>
        <end position="73"/>
    </location>
</feature>
<feature type="active site" description="Proton acceptor; via carboxylate" evidence="1">
    <location>
        <position position="493"/>
    </location>
</feature>
<feature type="binding site" evidence="2">
    <location>
        <begin position="45"/>
        <end position="48"/>
    </location>
    <ligand>
        <name>tetradecanoyl-CoA</name>
        <dbReference type="ChEBI" id="CHEBI:57385"/>
    </ligand>
</feature>
<feature type="binding site" evidence="2">
    <location>
        <begin position="182"/>
        <end position="184"/>
    </location>
    <ligand>
        <name>tetradecanoyl-CoA</name>
        <dbReference type="ChEBI" id="CHEBI:57385"/>
    </ligand>
</feature>
<feature type="binding site" evidence="2">
    <location>
        <begin position="190"/>
        <end position="194"/>
    </location>
    <ligand>
        <name>tetradecanoyl-CoA</name>
        <dbReference type="ChEBI" id="CHEBI:57385"/>
    </ligand>
</feature>
<evidence type="ECO:0000250" key="1"/>
<evidence type="ECO:0000250" key="2">
    <source>
        <dbReference type="UniProtKB" id="P14743"/>
    </source>
</evidence>
<evidence type="ECO:0000256" key="3">
    <source>
        <dbReference type="SAM" id="MobiDB-lite"/>
    </source>
</evidence>
<evidence type="ECO:0000305" key="4"/>
<keyword id="KW-0012">Acyltransferase</keyword>
<keyword id="KW-0963">Cytoplasm</keyword>
<keyword id="KW-1185">Reference proteome</keyword>
<keyword id="KW-0808">Transferase</keyword>
<protein>
    <recommendedName>
        <fullName>Glycylpeptide N-tetradecanoyltransferase</fullName>
        <ecNumber>2.3.1.97</ecNumber>
    </recommendedName>
    <alternativeName>
        <fullName>Myristoyl-CoA:protein N-myristoyltransferase</fullName>
        <shortName>NMT</shortName>
    </alternativeName>
    <alternativeName>
        <fullName>Peptide N-myristoyltransferase</fullName>
    </alternativeName>
</protein>
<name>NMT_CRYNJ</name>
<reference key="1">
    <citation type="journal article" date="2005" name="Science">
        <title>The genome of the basidiomycetous yeast and human pathogen Cryptococcus neoformans.</title>
        <authorList>
            <person name="Loftus B.J."/>
            <person name="Fung E."/>
            <person name="Roncaglia P."/>
            <person name="Rowley D."/>
            <person name="Amedeo P."/>
            <person name="Bruno D."/>
            <person name="Vamathevan J."/>
            <person name="Miranda M."/>
            <person name="Anderson I.J."/>
            <person name="Fraser J.A."/>
            <person name="Allen J.E."/>
            <person name="Bosdet I.E."/>
            <person name="Brent M.R."/>
            <person name="Chiu R."/>
            <person name="Doering T.L."/>
            <person name="Donlin M.J."/>
            <person name="D'Souza C.A."/>
            <person name="Fox D.S."/>
            <person name="Grinberg V."/>
            <person name="Fu J."/>
            <person name="Fukushima M."/>
            <person name="Haas B.J."/>
            <person name="Huang J.C."/>
            <person name="Janbon G."/>
            <person name="Jones S.J.M."/>
            <person name="Koo H.L."/>
            <person name="Krzywinski M.I."/>
            <person name="Kwon-Chung K.J."/>
            <person name="Lengeler K.B."/>
            <person name="Maiti R."/>
            <person name="Marra M.A."/>
            <person name="Marra R.E."/>
            <person name="Mathewson C.A."/>
            <person name="Mitchell T.G."/>
            <person name="Pertea M."/>
            <person name="Riggs F.R."/>
            <person name="Salzberg S.L."/>
            <person name="Schein J.E."/>
            <person name="Shvartsbeyn A."/>
            <person name="Shin H."/>
            <person name="Shumway M."/>
            <person name="Specht C.A."/>
            <person name="Suh B.B."/>
            <person name="Tenney A."/>
            <person name="Utterback T.R."/>
            <person name="Wickes B.L."/>
            <person name="Wortman J.R."/>
            <person name="Wye N.H."/>
            <person name="Kronstad J.W."/>
            <person name="Lodge J.K."/>
            <person name="Heitman J."/>
            <person name="Davis R.W."/>
            <person name="Fraser C.M."/>
            <person name="Hyman R.W."/>
        </authorList>
    </citation>
    <scope>NUCLEOTIDE SEQUENCE [LARGE SCALE GENOMIC DNA]</scope>
    <source>
        <strain>JEC21 / ATCC MYA-565</strain>
    </source>
</reference>
<organism>
    <name type="scientific">Cryptococcus neoformans var. neoformans serotype D (strain JEC21 / ATCC MYA-565)</name>
    <name type="common">Filobasidiella neoformans</name>
    <dbReference type="NCBI Taxonomy" id="214684"/>
    <lineage>
        <taxon>Eukaryota</taxon>
        <taxon>Fungi</taxon>
        <taxon>Dikarya</taxon>
        <taxon>Basidiomycota</taxon>
        <taxon>Agaricomycotina</taxon>
        <taxon>Tremellomycetes</taxon>
        <taxon>Tremellales</taxon>
        <taxon>Cryptococcaceae</taxon>
        <taxon>Cryptococcus</taxon>
        <taxon>Cryptococcus neoformans species complex</taxon>
    </lineage>
</organism>
<dbReference type="EC" id="2.3.1.97"/>
<dbReference type="EMBL" id="AE017356">
    <property type="protein sequence ID" value="AAW47000.1"/>
    <property type="status" value="ALT_SEQ"/>
    <property type="molecule type" value="Genomic_DNA"/>
</dbReference>
<dbReference type="RefSeq" id="XP_568517.1">
    <property type="nucleotide sequence ID" value="XM_568517.1"/>
</dbReference>
<dbReference type="SMR" id="P0CP20"/>
<dbReference type="FunCoup" id="P0CP20">
    <property type="interactions" value="643"/>
</dbReference>
<dbReference type="STRING" id="214684.P0CP20"/>
<dbReference type="PaxDb" id="214684-P0CP20"/>
<dbReference type="EnsemblFungi" id="AAW47000">
    <property type="protein sequence ID" value="AAW47000"/>
    <property type="gene ID" value="CNN00080"/>
</dbReference>
<dbReference type="GeneID" id="3255415"/>
<dbReference type="KEGG" id="cne:CNN00080"/>
<dbReference type="eggNOG" id="KOG2779">
    <property type="taxonomic scope" value="Eukaryota"/>
</dbReference>
<dbReference type="InParanoid" id="P0CP20"/>
<dbReference type="OrthoDB" id="60315at2759"/>
<dbReference type="Proteomes" id="UP000002149">
    <property type="component" value="Chromosome 14"/>
</dbReference>
<dbReference type="GO" id="GO:0005829">
    <property type="term" value="C:cytosol"/>
    <property type="evidence" value="ECO:0000318"/>
    <property type="project" value="GO_Central"/>
</dbReference>
<dbReference type="GO" id="GO:0004379">
    <property type="term" value="F:glycylpeptide N-tetradecanoyltransferase activity"/>
    <property type="evidence" value="ECO:0000318"/>
    <property type="project" value="GO_Central"/>
</dbReference>
<dbReference type="GO" id="GO:0072657">
    <property type="term" value="P:protein localization to membrane"/>
    <property type="evidence" value="ECO:0000318"/>
    <property type="project" value="GO_Central"/>
</dbReference>
<dbReference type="FunFam" id="3.40.630.30:FF:000042">
    <property type="entry name" value="Glycylpeptide N-tetradecanoyltransferase"/>
    <property type="match status" value="1"/>
</dbReference>
<dbReference type="FunFam" id="3.40.630.30:FF:000056">
    <property type="entry name" value="Glycylpeptide N-tetradecanoyltransferase"/>
    <property type="match status" value="1"/>
</dbReference>
<dbReference type="Gene3D" id="3.40.630.30">
    <property type="match status" value="2"/>
</dbReference>
<dbReference type="InterPro" id="IPR016181">
    <property type="entry name" value="Acyl_CoA_acyltransferase"/>
</dbReference>
<dbReference type="InterPro" id="IPR000903">
    <property type="entry name" value="NMT"/>
</dbReference>
<dbReference type="InterPro" id="IPR022677">
    <property type="entry name" value="NMT_C"/>
</dbReference>
<dbReference type="InterPro" id="IPR022678">
    <property type="entry name" value="NMT_CS"/>
</dbReference>
<dbReference type="InterPro" id="IPR022676">
    <property type="entry name" value="NMT_N"/>
</dbReference>
<dbReference type="PANTHER" id="PTHR11377:SF5">
    <property type="entry name" value="GLYCYLPEPTIDE N-TETRADECANOYLTRANSFERASE"/>
    <property type="match status" value="1"/>
</dbReference>
<dbReference type="PANTHER" id="PTHR11377">
    <property type="entry name" value="N-MYRISTOYL TRANSFERASE"/>
    <property type="match status" value="1"/>
</dbReference>
<dbReference type="Pfam" id="PF01233">
    <property type="entry name" value="NMT"/>
    <property type="match status" value="1"/>
</dbReference>
<dbReference type="Pfam" id="PF02799">
    <property type="entry name" value="NMT_C"/>
    <property type="match status" value="1"/>
</dbReference>
<dbReference type="PIRSF" id="PIRSF015892">
    <property type="entry name" value="N-myristl_transf"/>
    <property type="match status" value="1"/>
</dbReference>
<dbReference type="SUPFAM" id="SSF55729">
    <property type="entry name" value="Acyl-CoA N-acyltransferases (Nat)"/>
    <property type="match status" value="2"/>
</dbReference>
<dbReference type="PROSITE" id="PS00975">
    <property type="entry name" value="NMT_1"/>
    <property type="match status" value="1"/>
</dbReference>
<dbReference type="PROSITE" id="PS00976">
    <property type="entry name" value="NMT_2"/>
    <property type="match status" value="1"/>
</dbReference>
<accession>P0CP20</accession>
<accession>Q55HW5</accession>
<accession>Q5K7E9</accession>
<gene>
    <name type="ordered locus">CNN00080</name>
</gene>